<dbReference type="EMBL" id="CP001124">
    <property type="protein sequence ID" value="ACH40224.1"/>
    <property type="molecule type" value="Genomic_DNA"/>
</dbReference>
<dbReference type="RefSeq" id="WP_012531656.1">
    <property type="nucleotide sequence ID" value="NC_011146.1"/>
</dbReference>
<dbReference type="SMR" id="B5E9Q0"/>
<dbReference type="STRING" id="404380.Gbem_3225"/>
<dbReference type="KEGG" id="gbm:Gbem_3225"/>
<dbReference type="eggNOG" id="COG1301">
    <property type="taxonomic scope" value="Bacteria"/>
</dbReference>
<dbReference type="HOGENOM" id="CLU_019375_7_0_7"/>
<dbReference type="OrthoDB" id="9766690at2"/>
<dbReference type="Proteomes" id="UP000008825">
    <property type="component" value="Chromosome"/>
</dbReference>
<dbReference type="GO" id="GO:0005886">
    <property type="term" value="C:plasma membrane"/>
    <property type="evidence" value="ECO:0007669"/>
    <property type="project" value="UniProtKB-SubCell"/>
</dbReference>
<dbReference type="GO" id="GO:0015138">
    <property type="term" value="F:fumarate transmembrane transporter activity"/>
    <property type="evidence" value="ECO:0007669"/>
    <property type="project" value="TreeGrafter"/>
</dbReference>
<dbReference type="GO" id="GO:0015366">
    <property type="term" value="F:malate:proton symporter activity"/>
    <property type="evidence" value="ECO:0007669"/>
    <property type="project" value="TreeGrafter"/>
</dbReference>
<dbReference type="GO" id="GO:0015141">
    <property type="term" value="F:succinate transmembrane transporter activity"/>
    <property type="evidence" value="ECO:0007669"/>
    <property type="project" value="TreeGrafter"/>
</dbReference>
<dbReference type="GO" id="GO:0070778">
    <property type="term" value="P:L-aspartate transmembrane transport"/>
    <property type="evidence" value="ECO:0007669"/>
    <property type="project" value="TreeGrafter"/>
</dbReference>
<dbReference type="FunFam" id="1.10.3860.10:FF:000001">
    <property type="entry name" value="C4-dicarboxylate transport protein"/>
    <property type="match status" value="1"/>
</dbReference>
<dbReference type="Gene3D" id="1.10.3860.10">
    <property type="entry name" value="Sodium:dicarboxylate symporter"/>
    <property type="match status" value="1"/>
</dbReference>
<dbReference type="HAMAP" id="MF_01300">
    <property type="entry name" value="C4_dicarb_transport"/>
    <property type="match status" value="1"/>
</dbReference>
<dbReference type="InterPro" id="IPR023954">
    <property type="entry name" value="C4_dicarb_transport"/>
</dbReference>
<dbReference type="InterPro" id="IPR001991">
    <property type="entry name" value="Na-dicarboxylate_symporter"/>
</dbReference>
<dbReference type="InterPro" id="IPR018107">
    <property type="entry name" value="Na-dicarboxylate_symporter_CS"/>
</dbReference>
<dbReference type="InterPro" id="IPR036458">
    <property type="entry name" value="Na:dicarbo_symporter_sf"/>
</dbReference>
<dbReference type="NCBIfam" id="NF002461">
    <property type="entry name" value="PRK01663.1"/>
    <property type="match status" value="1"/>
</dbReference>
<dbReference type="NCBIfam" id="NF009587">
    <property type="entry name" value="PRK13027.1"/>
    <property type="match status" value="1"/>
</dbReference>
<dbReference type="PANTHER" id="PTHR42865:SF1">
    <property type="entry name" value="AEROBIC C4-DICARBOXYLATE TRANSPORT PROTEIN"/>
    <property type="match status" value="1"/>
</dbReference>
<dbReference type="PANTHER" id="PTHR42865">
    <property type="entry name" value="PROTON/GLUTAMATE-ASPARTATE SYMPORTER"/>
    <property type="match status" value="1"/>
</dbReference>
<dbReference type="Pfam" id="PF00375">
    <property type="entry name" value="SDF"/>
    <property type="match status" value="1"/>
</dbReference>
<dbReference type="PRINTS" id="PR00173">
    <property type="entry name" value="EDTRNSPORT"/>
</dbReference>
<dbReference type="SUPFAM" id="SSF118215">
    <property type="entry name" value="Proton glutamate symport protein"/>
    <property type="match status" value="1"/>
</dbReference>
<dbReference type="PROSITE" id="PS00713">
    <property type="entry name" value="NA_DICARBOXYL_SYMP_1"/>
    <property type="match status" value="1"/>
</dbReference>
<dbReference type="PROSITE" id="PS00714">
    <property type="entry name" value="NA_DICARBOXYL_SYMP_2"/>
    <property type="match status" value="1"/>
</dbReference>
<protein>
    <recommendedName>
        <fullName evidence="1">C4-dicarboxylate transport protein</fullName>
    </recommendedName>
</protein>
<organism>
    <name type="scientific">Citrifermentans bemidjiense (strain ATCC BAA-1014 / DSM 16622 / JCM 12645 / Bem)</name>
    <name type="common">Geobacter bemidjiensis</name>
    <dbReference type="NCBI Taxonomy" id="404380"/>
    <lineage>
        <taxon>Bacteria</taxon>
        <taxon>Pseudomonadati</taxon>
        <taxon>Thermodesulfobacteriota</taxon>
        <taxon>Desulfuromonadia</taxon>
        <taxon>Geobacterales</taxon>
        <taxon>Geobacteraceae</taxon>
        <taxon>Citrifermentans</taxon>
    </lineage>
</organism>
<gene>
    <name evidence="1" type="primary">dctA</name>
    <name type="ordered locus">Gbem_3225</name>
</gene>
<evidence type="ECO:0000255" key="1">
    <source>
        <dbReference type="HAMAP-Rule" id="MF_01300"/>
    </source>
</evidence>
<reference key="1">
    <citation type="submission" date="2008-07" db="EMBL/GenBank/DDBJ databases">
        <title>Complete sequence of Geobacter bemidjiensis BEM.</title>
        <authorList>
            <consortium name="US DOE Joint Genome Institute"/>
            <person name="Lucas S."/>
            <person name="Copeland A."/>
            <person name="Lapidus A."/>
            <person name="Glavina del Rio T."/>
            <person name="Dalin E."/>
            <person name="Tice H."/>
            <person name="Bruce D."/>
            <person name="Goodwin L."/>
            <person name="Pitluck S."/>
            <person name="Kiss H."/>
            <person name="Brettin T."/>
            <person name="Detter J.C."/>
            <person name="Han C."/>
            <person name="Kuske C.R."/>
            <person name="Schmutz J."/>
            <person name="Larimer F."/>
            <person name="Land M."/>
            <person name="Hauser L."/>
            <person name="Kyrpides N."/>
            <person name="Lykidis A."/>
            <person name="Lovley D."/>
            <person name="Richardson P."/>
        </authorList>
    </citation>
    <scope>NUCLEOTIDE SEQUENCE [LARGE SCALE GENOMIC DNA]</scope>
    <source>
        <strain>ATCC BAA-1014 / DSM 16622 / JCM 12645 / Bem</strain>
    </source>
</reference>
<keyword id="KW-0997">Cell inner membrane</keyword>
<keyword id="KW-1003">Cell membrane</keyword>
<keyword id="KW-0472">Membrane</keyword>
<keyword id="KW-1185">Reference proteome</keyword>
<keyword id="KW-0769">Symport</keyword>
<keyword id="KW-0812">Transmembrane</keyword>
<keyword id="KW-1133">Transmembrane helix</keyword>
<keyword id="KW-0813">Transport</keyword>
<sequence length="439" mass="46549">MKTKKFYQHLYFQVLTAISIGVAVGYYMPDTGTAMKPLGDGFIKMIKMIITPIIFCTVVTGIAGMDDMKKVGRVGGKALLYFEAVSTLALAIGLMVINVIQPGVGMNADVTKLDTKGLATYTATAAKSHSFADFALGIIPNSVVDAFAKGEILQVLFFAILFGLALSAMGEKGKPVYRMIDDVAHAFFGVVNIIMKFAPIGAFGAMAFTIGKFGLGSLTKLGMLMGSFYLTCLLFIFVVLGTIGKLCGFNIFKFISYIKEELLIVLGTSSSESALPRLMAKLENLGCSKSVVGLVIPTGYSFNLDGTSIYLTMAAVFVAQATNTPLDLTQTLTILGVLMLTSKGAAGVTGSGFVTLAATFAAIPTIPVAGLALILGIDRFMSEARALTNLVGNGVATVVVSRWENELNATRMSQVLNKELDEAAVEADLLMMDPEPEEA</sequence>
<name>DCTA_CITBB</name>
<feature type="chain" id="PRO_1000165289" description="C4-dicarboxylate transport protein">
    <location>
        <begin position="1"/>
        <end position="439"/>
    </location>
</feature>
<feature type="transmembrane region" description="Helical" evidence="1">
    <location>
        <begin position="9"/>
        <end position="29"/>
    </location>
</feature>
<feature type="transmembrane region" description="Helical" evidence="1">
    <location>
        <begin position="45"/>
        <end position="65"/>
    </location>
</feature>
<feature type="transmembrane region" description="Helical" evidence="1">
    <location>
        <begin position="80"/>
        <end position="100"/>
    </location>
</feature>
<feature type="transmembrane region" description="Helical" evidence="1">
    <location>
        <begin position="150"/>
        <end position="170"/>
    </location>
</feature>
<feature type="transmembrane region" description="Helical" evidence="1">
    <location>
        <begin position="186"/>
        <end position="206"/>
    </location>
</feature>
<feature type="transmembrane region" description="Helical" evidence="1">
    <location>
        <begin position="221"/>
        <end position="241"/>
    </location>
</feature>
<feature type="transmembrane region" description="Helical" evidence="1">
    <location>
        <begin position="291"/>
        <end position="311"/>
    </location>
</feature>
<feature type="transmembrane region" description="Helical" evidence="1">
    <location>
        <begin position="334"/>
        <end position="354"/>
    </location>
</feature>
<feature type="transmembrane region" description="Helical" evidence="1">
    <location>
        <begin position="357"/>
        <end position="377"/>
    </location>
</feature>
<proteinExistence type="inferred from homology"/>
<accession>B5E9Q0</accession>
<comment type="function">
    <text evidence="1">Responsible for the transport of dicarboxylates such as succinate, fumarate, and malate from the periplasm across the membrane.</text>
</comment>
<comment type="subcellular location">
    <subcellularLocation>
        <location evidence="1">Cell inner membrane</location>
        <topology evidence="1">Multi-pass membrane protein</topology>
    </subcellularLocation>
</comment>
<comment type="similarity">
    <text evidence="1">Belongs to the dicarboxylate/amino acid:cation symporter (DAACS) (TC 2.A.23) family.</text>
</comment>